<proteinExistence type="inferred from homology"/>
<keyword id="KW-0378">Hydrolase</keyword>
<keyword id="KW-0408">Iron</keyword>
<keyword id="KW-0479">Metal-binding</keyword>
<keyword id="KW-0648">Protein biosynthesis</keyword>
<protein>
    <recommendedName>
        <fullName evidence="1">Peptide deformylase</fullName>
        <shortName evidence="1">PDF</shortName>
        <ecNumber evidence="1">3.5.1.88</ecNumber>
    </recommendedName>
    <alternativeName>
        <fullName evidence="1">Polypeptide deformylase</fullName>
    </alternativeName>
</protein>
<accession>B3CMB1</accession>
<evidence type="ECO:0000255" key="1">
    <source>
        <dbReference type="HAMAP-Rule" id="MF_00163"/>
    </source>
</evidence>
<comment type="function">
    <text evidence="1">Removes the formyl group from the N-terminal Met of newly synthesized proteins. Requires at least a dipeptide for an efficient rate of reaction. N-terminal L-methionine is a prerequisite for activity but the enzyme has broad specificity at other positions.</text>
</comment>
<comment type="catalytic activity">
    <reaction evidence="1">
        <text>N-terminal N-formyl-L-methionyl-[peptide] + H2O = N-terminal L-methionyl-[peptide] + formate</text>
        <dbReference type="Rhea" id="RHEA:24420"/>
        <dbReference type="Rhea" id="RHEA-COMP:10639"/>
        <dbReference type="Rhea" id="RHEA-COMP:10640"/>
        <dbReference type="ChEBI" id="CHEBI:15377"/>
        <dbReference type="ChEBI" id="CHEBI:15740"/>
        <dbReference type="ChEBI" id="CHEBI:49298"/>
        <dbReference type="ChEBI" id="CHEBI:64731"/>
        <dbReference type="EC" id="3.5.1.88"/>
    </reaction>
</comment>
<comment type="cofactor">
    <cofactor evidence="1">
        <name>Fe(2+)</name>
        <dbReference type="ChEBI" id="CHEBI:29033"/>
    </cofactor>
    <text evidence="1">Binds 1 Fe(2+) ion.</text>
</comment>
<comment type="similarity">
    <text evidence="1">Belongs to the polypeptide deformylase family.</text>
</comment>
<sequence>MSKLPIVIAPDERLTTRASEVIDITDKIKELVNDMFETMYYAEGLGLAAVQVGVLKRIFIMDVQPEKAEDGPAGYESTGKFCMINPEITELSGEQVILKEGCLSIPEQSHEIKRPKYLTVKYKNLNNEEQTLKASGWLARCIQHELDHLNGILYVRHLSKLKYDMAMKKAQKVKRHYEQ</sequence>
<reference key="1">
    <citation type="journal article" date="2008" name="Mol. Biol. Evol.">
        <title>Genome evolution of Wolbachia strain wPip from the Culex pipiens group.</title>
        <authorList>
            <person name="Klasson L."/>
            <person name="Walker T."/>
            <person name="Sebaihia M."/>
            <person name="Sanders M.J."/>
            <person name="Quail M.A."/>
            <person name="Lord A."/>
            <person name="Sanders S."/>
            <person name="Earl J."/>
            <person name="O'Neill S.L."/>
            <person name="Thomson N."/>
            <person name="Sinkins S.P."/>
            <person name="Parkhill J."/>
        </authorList>
    </citation>
    <scope>NUCLEOTIDE SEQUENCE [LARGE SCALE GENOMIC DNA]</scope>
    <source>
        <strain>wPip</strain>
    </source>
</reference>
<gene>
    <name evidence="1" type="primary">def</name>
    <name type="ordered locus">WP0923</name>
</gene>
<feature type="chain" id="PRO_1000097360" description="Peptide deformylase">
    <location>
        <begin position="1"/>
        <end position="179"/>
    </location>
</feature>
<feature type="active site" evidence="1">
    <location>
        <position position="145"/>
    </location>
</feature>
<feature type="binding site" evidence="1">
    <location>
        <position position="102"/>
    </location>
    <ligand>
        <name>Fe cation</name>
        <dbReference type="ChEBI" id="CHEBI:24875"/>
    </ligand>
</feature>
<feature type="binding site" evidence="1">
    <location>
        <position position="144"/>
    </location>
    <ligand>
        <name>Fe cation</name>
        <dbReference type="ChEBI" id="CHEBI:24875"/>
    </ligand>
</feature>
<feature type="binding site" evidence="1">
    <location>
        <position position="148"/>
    </location>
    <ligand>
        <name>Fe cation</name>
        <dbReference type="ChEBI" id="CHEBI:24875"/>
    </ligand>
</feature>
<dbReference type="EC" id="3.5.1.88" evidence="1"/>
<dbReference type="EMBL" id="AM999887">
    <property type="protein sequence ID" value="CAQ55031.1"/>
    <property type="molecule type" value="Genomic_DNA"/>
</dbReference>
<dbReference type="RefSeq" id="WP_007302315.1">
    <property type="nucleotide sequence ID" value="NC_010981.1"/>
</dbReference>
<dbReference type="SMR" id="B3CMB1"/>
<dbReference type="KEGG" id="wpi:WP0923"/>
<dbReference type="eggNOG" id="COG0242">
    <property type="taxonomic scope" value="Bacteria"/>
</dbReference>
<dbReference type="HOGENOM" id="CLU_061901_2_2_5"/>
<dbReference type="Proteomes" id="UP000008814">
    <property type="component" value="Chromosome"/>
</dbReference>
<dbReference type="GO" id="GO:0046872">
    <property type="term" value="F:metal ion binding"/>
    <property type="evidence" value="ECO:0007669"/>
    <property type="project" value="UniProtKB-KW"/>
</dbReference>
<dbReference type="GO" id="GO:0042586">
    <property type="term" value="F:peptide deformylase activity"/>
    <property type="evidence" value="ECO:0007669"/>
    <property type="project" value="UniProtKB-UniRule"/>
</dbReference>
<dbReference type="GO" id="GO:0006412">
    <property type="term" value="P:translation"/>
    <property type="evidence" value="ECO:0007669"/>
    <property type="project" value="UniProtKB-UniRule"/>
</dbReference>
<dbReference type="CDD" id="cd00487">
    <property type="entry name" value="Pep_deformylase"/>
    <property type="match status" value="1"/>
</dbReference>
<dbReference type="Gene3D" id="3.90.45.10">
    <property type="entry name" value="Peptide deformylase"/>
    <property type="match status" value="1"/>
</dbReference>
<dbReference type="HAMAP" id="MF_00163">
    <property type="entry name" value="Pep_deformylase"/>
    <property type="match status" value="1"/>
</dbReference>
<dbReference type="InterPro" id="IPR023635">
    <property type="entry name" value="Peptide_deformylase"/>
</dbReference>
<dbReference type="InterPro" id="IPR036821">
    <property type="entry name" value="Peptide_deformylase_sf"/>
</dbReference>
<dbReference type="NCBIfam" id="TIGR00079">
    <property type="entry name" value="pept_deformyl"/>
    <property type="match status" value="1"/>
</dbReference>
<dbReference type="NCBIfam" id="NF001159">
    <property type="entry name" value="PRK00150.1-3"/>
    <property type="match status" value="1"/>
</dbReference>
<dbReference type="PANTHER" id="PTHR10458">
    <property type="entry name" value="PEPTIDE DEFORMYLASE"/>
    <property type="match status" value="1"/>
</dbReference>
<dbReference type="PANTHER" id="PTHR10458:SF22">
    <property type="entry name" value="PEPTIDE DEFORMYLASE"/>
    <property type="match status" value="1"/>
</dbReference>
<dbReference type="Pfam" id="PF01327">
    <property type="entry name" value="Pep_deformylase"/>
    <property type="match status" value="1"/>
</dbReference>
<dbReference type="PIRSF" id="PIRSF004749">
    <property type="entry name" value="Pep_def"/>
    <property type="match status" value="1"/>
</dbReference>
<dbReference type="PRINTS" id="PR01576">
    <property type="entry name" value="PDEFORMYLASE"/>
</dbReference>
<dbReference type="SUPFAM" id="SSF56420">
    <property type="entry name" value="Peptide deformylase"/>
    <property type="match status" value="1"/>
</dbReference>
<name>DEF_WOLPP</name>
<organism>
    <name type="scientific">Wolbachia pipientis subsp. Culex pipiens (strain wPip)</name>
    <dbReference type="NCBI Taxonomy" id="570417"/>
    <lineage>
        <taxon>Bacteria</taxon>
        <taxon>Pseudomonadati</taxon>
        <taxon>Pseudomonadota</taxon>
        <taxon>Alphaproteobacteria</taxon>
        <taxon>Rickettsiales</taxon>
        <taxon>Anaplasmataceae</taxon>
        <taxon>Wolbachieae</taxon>
        <taxon>Wolbachia</taxon>
    </lineage>
</organism>